<dbReference type="EC" id="1.17.7.3" evidence="1"/>
<dbReference type="EMBL" id="CP001657">
    <property type="protein sequence ID" value="ACT14037.1"/>
    <property type="molecule type" value="Genomic_DNA"/>
</dbReference>
<dbReference type="RefSeq" id="WP_015841191.1">
    <property type="nucleotide sequence ID" value="NC_012917.1"/>
</dbReference>
<dbReference type="SMR" id="C6DBH4"/>
<dbReference type="STRING" id="561230.PC1_3014"/>
<dbReference type="GeneID" id="67793150"/>
<dbReference type="KEGG" id="pct:PC1_3014"/>
<dbReference type="eggNOG" id="COG0821">
    <property type="taxonomic scope" value="Bacteria"/>
</dbReference>
<dbReference type="HOGENOM" id="CLU_042258_0_0_6"/>
<dbReference type="OrthoDB" id="9803214at2"/>
<dbReference type="UniPathway" id="UPA00056">
    <property type="reaction ID" value="UER00096"/>
</dbReference>
<dbReference type="Proteomes" id="UP000002736">
    <property type="component" value="Chromosome"/>
</dbReference>
<dbReference type="GO" id="GO:0051539">
    <property type="term" value="F:4 iron, 4 sulfur cluster binding"/>
    <property type="evidence" value="ECO:0007669"/>
    <property type="project" value="UniProtKB-UniRule"/>
</dbReference>
<dbReference type="GO" id="GO:0046429">
    <property type="term" value="F:4-hydroxy-3-methylbut-2-en-1-yl diphosphate synthase activity (ferredoxin)"/>
    <property type="evidence" value="ECO:0007669"/>
    <property type="project" value="UniProtKB-UniRule"/>
</dbReference>
<dbReference type="GO" id="GO:0141197">
    <property type="term" value="F:4-hydroxy-3-methylbut-2-enyl-diphosphate synthase activity (flavodoxin)"/>
    <property type="evidence" value="ECO:0007669"/>
    <property type="project" value="UniProtKB-EC"/>
</dbReference>
<dbReference type="GO" id="GO:0005506">
    <property type="term" value="F:iron ion binding"/>
    <property type="evidence" value="ECO:0007669"/>
    <property type="project" value="InterPro"/>
</dbReference>
<dbReference type="GO" id="GO:0019288">
    <property type="term" value="P:isopentenyl diphosphate biosynthetic process, methylerythritol 4-phosphate pathway"/>
    <property type="evidence" value="ECO:0007669"/>
    <property type="project" value="UniProtKB-UniRule"/>
</dbReference>
<dbReference type="GO" id="GO:0016114">
    <property type="term" value="P:terpenoid biosynthetic process"/>
    <property type="evidence" value="ECO:0007669"/>
    <property type="project" value="InterPro"/>
</dbReference>
<dbReference type="FunFam" id="3.20.20.20:FF:000001">
    <property type="entry name" value="4-hydroxy-3-methylbut-2-en-1-yl diphosphate synthase (flavodoxin)"/>
    <property type="match status" value="1"/>
</dbReference>
<dbReference type="FunFam" id="3.30.413.10:FF:000002">
    <property type="entry name" value="4-hydroxy-3-methylbut-2-en-1-yl diphosphate synthase (flavodoxin)"/>
    <property type="match status" value="1"/>
</dbReference>
<dbReference type="Gene3D" id="3.20.20.20">
    <property type="entry name" value="Dihydropteroate synthase-like"/>
    <property type="match status" value="1"/>
</dbReference>
<dbReference type="Gene3D" id="3.30.413.10">
    <property type="entry name" value="Sulfite Reductase Hemoprotein, domain 1"/>
    <property type="match status" value="1"/>
</dbReference>
<dbReference type="HAMAP" id="MF_00159">
    <property type="entry name" value="IspG"/>
    <property type="match status" value="1"/>
</dbReference>
<dbReference type="InterPro" id="IPR011005">
    <property type="entry name" value="Dihydropteroate_synth-like_sf"/>
</dbReference>
<dbReference type="InterPro" id="IPR036849">
    <property type="entry name" value="Enolase-like_C_sf"/>
</dbReference>
<dbReference type="InterPro" id="IPR016425">
    <property type="entry name" value="IspG_bac"/>
</dbReference>
<dbReference type="InterPro" id="IPR004588">
    <property type="entry name" value="IspG_bac-typ"/>
</dbReference>
<dbReference type="InterPro" id="IPR045854">
    <property type="entry name" value="NO2/SO3_Rdtase_4Fe4S_sf"/>
</dbReference>
<dbReference type="NCBIfam" id="TIGR00612">
    <property type="entry name" value="ispG_gcpE"/>
    <property type="match status" value="1"/>
</dbReference>
<dbReference type="NCBIfam" id="NF001540">
    <property type="entry name" value="PRK00366.1"/>
    <property type="match status" value="1"/>
</dbReference>
<dbReference type="PANTHER" id="PTHR30454">
    <property type="entry name" value="4-HYDROXY-3-METHYLBUT-2-EN-1-YL DIPHOSPHATE SYNTHASE"/>
    <property type="match status" value="1"/>
</dbReference>
<dbReference type="PANTHER" id="PTHR30454:SF0">
    <property type="entry name" value="4-HYDROXY-3-METHYLBUT-2-EN-1-YL DIPHOSPHATE SYNTHASE (FERREDOXIN), CHLOROPLASTIC"/>
    <property type="match status" value="1"/>
</dbReference>
<dbReference type="Pfam" id="PF04551">
    <property type="entry name" value="GcpE"/>
    <property type="match status" value="1"/>
</dbReference>
<dbReference type="PIRSF" id="PIRSF004640">
    <property type="entry name" value="IspG"/>
    <property type="match status" value="1"/>
</dbReference>
<dbReference type="SUPFAM" id="SSF51604">
    <property type="entry name" value="Enolase C-terminal domain-like"/>
    <property type="match status" value="1"/>
</dbReference>
<dbReference type="SUPFAM" id="SSF56014">
    <property type="entry name" value="Nitrite and sulphite reductase 4Fe-4S domain-like"/>
    <property type="match status" value="1"/>
</dbReference>
<proteinExistence type="inferred from homology"/>
<feature type="chain" id="PRO_1000203509" description="4-hydroxy-3-methylbut-2-en-1-yl diphosphate synthase (flavodoxin)">
    <location>
        <begin position="1"/>
        <end position="373"/>
    </location>
</feature>
<feature type="binding site" evidence="1">
    <location>
        <position position="270"/>
    </location>
    <ligand>
        <name>[4Fe-4S] cluster</name>
        <dbReference type="ChEBI" id="CHEBI:49883"/>
    </ligand>
</feature>
<feature type="binding site" evidence="1">
    <location>
        <position position="273"/>
    </location>
    <ligand>
        <name>[4Fe-4S] cluster</name>
        <dbReference type="ChEBI" id="CHEBI:49883"/>
    </ligand>
</feature>
<feature type="binding site" evidence="1">
    <location>
        <position position="305"/>
    </location>
    <ligand>
        <name>[4Fe-4S] cluster</name>
        <dbReference type="ChEBI" id="CHEBI:49883"/>
    </ligand>
</feature>
<feature type="binding site" evidence="1">
    <location>
        <position position="312"/>
    </location>
    <ligand>
        <name>[4Fe-4S] cluster</name>
        <dbReference type="ChEBI" id="CHEBI:49883"/>
    </ligand>
</feature>
<keyword id="KW-0004">4Fe-4S</keyword>
<keyword id="KW-0408">Iron</keyword>
<keyword id="KW-0411">Iron-sulfur</keyword>
<keyword id="KW-0414">Isoprene biosynthesis</keyword>
<keyword id="KW-0479">Metal-binding</keyword>
<keyword id="KW-0560">Oxidoreductase</keyword>
<accession>C6DBH4</accession>
<reference key="1">
    <citation type="submission" date="2009-07" db="EMBL/GenBank/DDBJ databases">
        <title>Complete sequence of Pectobacterium carotovorum subsp. carotovorum PC1.</title>
        <authorList>
            <consortium name="US DOE Joint Genome Institute"/>
            <person name="Lucas S."/>
            <person name="Copeland A."/>
            <person name="Lapidus A."/>
            <person name="Glavina del Rio T."/>
            <person name="Tice H."/>
            <person name="Bruce D."/>
            <person name="Goodwin L."/>
            <person name="Pitluck S."/>
            <person name="Munk A.C."/>
            <person name="Brettin T."/>
            <person name="Detter J.C."/>
            <person name="Han C."/>
            <person name="Tapia R."/>
            <person name="Larimer F."/>
            <person name="Land M."/>
            <person name="Hauser L."/>
            <person name="Kyrpides N."/>
            <person name="Mikhailova N."/>
            <person name="Balakrishnan V."/>
            <person name="Glasner J."/>
            <person name="Perna N.T."/>
        </authorList>
    </citation>
    <scope>NUCLEOTIDE SEQUENCE [LARGE SCALE GENOMIC DNA]</scope>
    <source>
        <strain>PC1</strain>
    </source>
</reference>
<evidence type="ECO:0000255" key="1">
    <source>
        <dbReference type="HAMAP-Rule" id="MF_00159"/>
    </source>
</evidence>
<gene>
    <name evidence="1" type="primary">ispG</name>
    <name type="ordered locus">PC1_3014</name>
</gene>
<organism>
    <name type="scientific">Pectobacterium carotovorum subsp. carotovorum (strain PC1)</name>
    <dbReference type="NCBI Taxonomy" id="561230"/>
    <lineage>
        <taxon>Bacteria</taxon>
        <taxon>Pseudomonadati</taxon>
        <taxon>Pseudomonadota</taxon>
        <taxon>Gammaproteobacteria</taxon>
        <taxon>Enterobacterales</taxon>
        <taxon>Pectobacteriaceae</taxon>
        <taxon>Pectobacterium</taxon>
    </lineage>
</organism>
<comment type="function">
    <text evidence="1">Converts 2C-methyl-D-erythritol 2,4-cyclodiphosphate (ME-2,4cPP) into 1-hydroxy-2-methyl-2-(E)-butenyl 4-diphosphate.</text>
</comment>
<comment type="catalytic activity">
    <reaction evidence="1">
        <text>(2E)-4-hydroxy-3-methylbut-2-enyl diphosphate + oxidized [flavodoxin] + H2O + 2 H(+) = 2-C-methyl-D-erythritol 2,4-cyclic diphosphate + reduced [flavodoxin]</text>
        <dbReference type="Rhea" id="RHEA:43604"/>
        <dbReference type="Rhea" id="RHEA-COMP:10622"/>
        <dbReference type="Rhea" id="RHEA-COMP:10623"/>
        <dbReference type="ChEBI" id="CHEBI:15377"/>
        <dbReference type="ChEBI" id="CHEBI:15378"/>
        <dbReference type="ChEBI" id="CHEBI:57618"/>
        <dbReference type="ChEBI" id="CHEBI:58210"/>
        <dbReference type="ChEBI" id="CHEBI:58483"/>
        <dbReference type="ChEBI" id="CHEBI:128753"/>
        <dbReference type="EC" id="1.17.7.3"/>
    </reaction>
</comment>
<comment type="cofactor">
    <cofactor evidence="1">
        <name>[4Fe-4S] cluster</name>
        <dbReference type="ChEBI" id="CHEBI:49883"/>
    </cofactor>
    <text evidence="1">Binds 1 [4Fe-4S] cluster.</text>
</comment>
<comment type="pathway">
    <text evidence="1">Isoprenoid biosynthesis; isopentenyl diphosphate biosynthesis via DXP pathway; isopentenyl diphosphate from 1-deoxy-D-xylulose 5-phosphate: step 5/6.</text>
</comment>
<comment type="similarity">
    <text evidence="1">Belongs to the IspG family.</text>
</comment>
<sequence length="373" mass="40848">MHNAAPITRRKSKRIYVGKVPVGDGAPIAVQSMTNTRTTDVEATVNQIRSLERVGVDIVRVSVPTMDAAEAFKLIKQQVNVPLVADIHFDYRIALKVAEYGVDCLRINPGNIGNEERIRSVVDCARYNNIPIRIGVNGGSLEKDLQEKYGEPTPEALLESAMRHVDILDRLNFDQFKVSVKASDVFLAVQSYRLLAARIDQPLHLGITEAGGARSGAVKSAIGLGLLLSEGIGDTLRISLAADPVEEVKVGFDILKSLRIRSRGINFIACPTCSRQEFDVIGTVNALEQRLEDIITPMDVSIIGCVVNGPGEALVSTIGVTGGHNKSGFYEDGVRQRERFDNEQMIDQLEAKIRAKASMMDENQRITVNLVDK</sequence>
<name>ISPG_PECCP</name>
<protein>
    <recommendedName>
        <fullName evidence="1">4-hydroxy-3-methylbut-2-en-1-yl diphosphate synthase (flavodoxin)</fullName>
        <ecNumber evidence="1">1.17.7.3</ecNumber>
    </recommendedName>
    <alternativeName>
        <fullName evidence="1">1-hydroxy-2-methyl-2-(E)-butenyl 4-diphosphate synthase</fullName>
    </alternativeName>
</protein>